<evidence type="ECO:0000255" key="1">
    <source>
        <dbReference type="HAMAP-Rule" id="MF_01007"/>
    </source>
</evidence>
<gene>
    <name evidence="1" type="primary">rsmH</name>
    <name type="synonym">mraW</name>
    <name type="ordered locus">JTY_2176</name>
</gene>
<sequence>MQTRAPWSLPEATLAYFPNARFVSSDRDLGAGAAPGIAASRSTACQTWGGITVADPGSGPTGFGHVPVLAQRCFELLTPALTRYYPDGSQAVLLDATIGAGGHAERFLEGLPGLRLIGLDRDPTALDVARSRLVRFADRLTLVHTRYDCLGAALAESGYAAVGSVDGILFDLGVSSMQLDRAERGFAYATDAPLDMRMDPTTPLTAADIVNTYDEAALADILRRYGEERFARRIAAGIVRRRAKTPFTSTAELVALLYQAIPAPARRVGGHPAKRTFQALRIAVNDELESLRTAVPAALDALAIGGRIAVLAYQSLEDRIVKRVFAEAVASATPAGLPVELPGHEPRFRSLTHGAERASVAEIERNPRSTPVRLRALQRVEHRAQSQQWATEKGDS</sequence>
<reference key="1">
    <citation type="journal article" date="2009" name="Vaccine">
        <title>Whole genome sequence analysis of Mycobacterium bovis bacillus Calmette-Guerin (BCG) Tokyo 172: a comparative study of BCG vaccine substrains.</title>
        <authorList>
            <person name="Seki M."/>
            <person name="Honda I."/>
            <person name="Fujita I."/>
            <person name="Yano I."/>
            <person name="Yamamoto S."/>
            <person name="Koyama A."/>
        </authorList>
    </citation>
    <scope>NUCLEOTIDE SEQUENCE [LARGE SCALE GENOMIC DNA]</scope>
    <source>
        <strain>BCG / Tokyo 172 / ATCC 35737 / TMC 1019</strain>
    </source>
</reference>
<organism>
    <name type="scientific">Mycobacterium bovis (strain BCG / Tokyo 172 / ATCC 35737 / TMC 1019)</name>
    <dbReference type="NCBI Taxonomy" id="561275"/>
    <lineage>
        <taxon>Bacteria</taxon>
        <taxon>Bacillati</taxon>
        <taxon>Actinomycetota</taxon>
        <taxon>Actinomycetes</taxon>
        <taxon>Mycobacteriales</taxon>
        <taxon>Mycobacteriaceae</taxon>
        <taxon>Mycobacterium</taxon>
        <taxon>Mycobacterium tuberculosis complex</taxon>
    </lineage>
</organism>
<feature type="chain" id="PRO_0000386987" description="Ribosomal RNA small subunit methyltransferase H">
    <location>
        <begin position="1"/>
        <end position="396"/>
    </location>
</feature>
<feature type="binding site" evidence="1">
    <location>
        <begin position="101"/>
        <end position="103"/>
    </location>
    <ligand>
        <name>S-adenosyl-L-methionine</name>
        <dbReference type="ChEBI" id="CHEBI:59789"/>
    </ligand>
</feature>
<feature type="binding site" evidence="1">
    <location>
        <position position="120"/>
    </location>
    <ligand>
        <name>S-adenosyl-L-methionine</name>
        <dbReference type="ChEBI" id="CHEBI:59789"/>
    </ligand>
</feature>
<feature type="binding site" evidence="1">
    <location>
        <position position="147"/>
    </location>
    <ligand>
        <name>S-adenosyl-L-methionine</name>
        <dbReference type="ChEBI" id="CHEBI:59789"/>
    </ligand>
</feature>
<feature type="binding site" evidence="1">
    <location>
        <position position="171"/>
    </location>
    <ligand>
        <name>S-adenosyl-L-methionine</name>
        <dbReference type="ChEBI" id="CHEBI:59789"/>
    </ligand>
</feature>
<feature type="binding site" evidence="1">
    <location>
        <position position="178"/>
    </location>
    <ligand>
        <name>S-adenosyl-L-methionine</name>
        <dbReference type="ChEBI" id="CHEBI:59789"/>
    </ligand>
</feature>
<keyword id="KW-0963">Cytoplasm</keyword>
<keyword id="KW-0489">Methyltransferase</keyword>
<keyword id="KW-0698">rRNA processing</keyword>
<keyword id="KW-0949">S-adenosyl-L-methionine</keyword>
<keyword id="KW-0808">Transferase</keyword>
<comment type="function">
    <text evidence="1">Specifically methylates the N4 position of cytidine in position 1402 (C1402) of 16S rRNA.</text>
</comment>
<comment type="catalytic activity">
    <reaction evidence="1">
        <text>cytidine(1402) in 16S rRNA + S-adenosyl-L-methionine = N(4)-methylcytidine(1402) in 16S rRNA + S-adenosyl-L-homocysteine + H(+)</text>
        <dbReference type="Rhea" id="RHEA:42928"/>
        <dbReference type="Rhea" id="RHEA-COMP:10286"/>
        <dbReference type="Rhea" id="RHEA-COMP:10287"/>
        <dbReference type="ChEBI" id="CHEBI:15378"/>
        <dbReference type="ChEBI" id="CHEBI:57856"/>
        <dbReference type="ChEBI" id="CHEBI:59789"/>
        <dbReference type="ChEBI" id="CHEBI:74506"/>
        <dbReference type="ChEBI" id="CHEBI:82748"/>
        <dbReference type="EC" id="2.1.1.199"/>
    </reaction>
</comment>
<comment type="subcellular location">
    <subcellularLocation>
        <location evidence="1">Cytoplasm</location>
    </subcellularLocation>
</comment>
<comment type="similarity">
    <text evidence="1">Belongs to the methyltransferase superfamily. RsmH family.</text>
</comment>
<protein>
    <recommendedName>
        <fullName evidence="1">Ribosomal RNA small subunit methyltransferase H</fullName>
        <ecNumber evidence="1">2.1.1.199</ecNumber>
    </recommendedName>
    <alternativeName>
        <fullName evidence="1">16S rRNA m(4)C1402 methyltransferase</fullName>
    </alternativeName>
    <alternativeName>
        <fullName evidence="1">rRNA (cytosine-N(4)-)-methyltransferase RsmH</fullName>
    </alternativeName>
</protein>
<name>RSMH_MYCBT</name>
<proteinExistence type="inferred from homology"/>
<dbReference type="EC" id="2.1.1.199" evidence="1"/>
<dbReference type="EMBL" id="AP010918">
    <property type="protein sequence ID" value="BAH26460.1"/>
    <property type="molecule type" value="Genomic_DNA"/>
</dbReference>
<dbReference type="RefSeq" id="WP_003411221.1">
    <property type="nucleotide sequence ID" value="NZ_CP014566.1"/>
</dbReference>
<dbReference type="SMR" id="C1AQ81"/>
<dbReference type="KEGG" id="mbt:JTY_2176"/>
<dbReference type="HOGENOM" id="CLU_038422_0_0_11"/>
<dbReference type="GO" id="GO:0005737">
    <property type="term" value="C:cytoplasm"/>
    <property type="evidence" value="ECO:0007669"/>
    <property type="project" value="UniProtKB-SubCell"/>
</dbReference>
<dbReference type="GO" id="GO:0071424">
    <property type="term" value="F:rRNA (cytosine-N4-)-methyltransferase activity"/>
    <property type="evidence" value="ECO:0007669"/>
    <property type="project" value="UniProtKB-UniRule"/>
</dbReference>
<dbReference type="GO" id="GO:0070475">
    <property type="term" value="P:rRNA base methylation"/>
    <property type="evidence" value="ECO:0007669"/>
    <property type="project" value="UniProtKB-UniRule"/>
</dbReference>
<dbReference type="FunFam" id="1.10.150.170:FF:000001">
    <property type="entry name" value="Ribosomal RNA small subunit methyltransferase H"/>
    <property type="match status" value="1"/>
</dbReference>
<dbReference type="Gene3D" id="1.10.150.170">
    <property type="entry name" value="Putative methyltransferase TM0872, insert domain"/>
    <property type="match status" value="1"/>
</dbReference>
<dbReference type="Gene3D" id="3.40.50.150">
    <property type="entry name" value="Vaccinia Virus protein VP39"/>
    <property type="match status" value="1"/>
</dbReference>
<dbReference type="HAMAP" id="MF_01007">
    <property type="entry name" value="16SrRNA_methyltr_H"/>
    <property type="match status" value="1"/>
</dbReference>
<dbReference type="InterPro" id="IPR002903">
    <property type="entry name" value="RsmH"/>
</dbReference>
<dbReference type="InterPro" id="IPR023397">
    <property type="entry name" value="SAM-dep_MeTrfase_MraW_recog"/>
</dbReference>
<dbReference type="InterPro" id="IPR029063">
    <property type="entry name" value="SAM-dependent_MTases_sf"/>
</dbReference>
<dbReference type="NCBIfam" id="TIGR00006">
    <property type="entry name" value="16S rRNA (cytosine(1402)-N(4))-methyltransferase RsmH"/>
    <property type="match status" value="1"/>
</dbReference>
<dbReference type="PANTHER" id="PTHR11265:SF0">
    <property type="entry name" value="12S RRNA N4-METHYLCYTIDINE METHYLTRANSFERASE"/>
    <property type="match status" value="1"/>
</dbReference>
<dbReference type="PANTHER" id="PTHR11265">
    <property type="entry name" value="S-ADENOSYL-METHYLTRANSFERASE MRAW"/>
    <property type="match status" value="1"/>
</dbReference>
<dbReference type="Pfam" id="PF01795">
    <property type="entry name" value="Methyltransf_5"/>
    <property type="match status" value="1"/>
</dbReference>
<dbReference type="SUPFAM" id="SSF81799">
    <property type="entry name" value="Putative methyltransferase TM0872, insert domain"/>
    <property type="match status" value="1"/>
</dbReference>
<dbReference type="SUPFAM" id="SSF53335">
    <property type="entry name" value="S-adenosyl-L-methionine-dependent methyltransferases"/>
    <property type="match status" value="1"/>
</dbReference>
<accession>C1AQ81</accession>